<protein>
    <recommendedName>
        <fullName>Cytochrome b</fullName>
    </recommendedName>
    <alternativeName>
        <fullName>Complex III subunit 3</fullName>
    </alternativeName>
    <alternativeName>
        <fullName>Complex III subunit III</fullName>
    </alternativeName>
    <alternativeName>
        <fullName>Cytochrome b-c1 complex subunit 3</fullName>
    </alternativeName>
    <alternativeName>
        <fullName>Ubiquinol-cytochrome-c reductase complex cytochrome b subunit</fullName>
    </alternativeName>
</protein>
<feature type="chain" id="PRO_0000254772" description="Cytochrome b">
    <location>
        <begin position="1"/>
        <end position="379"/>
    </location>
</feature>
<feature type="transmembrane region" description="Helical" evidence="2">
    <location>
        <begin position="33"/>
        <end position="53"/>
    </location>
</feature>
<feature type="transmembrane region" description="Helical" evidence="2">
    <location>
        <begin position="77"/>
        <end position="98"/>
    </location>
</feature>
<feature type="transmembrane region" description="Helical" evidence="2">
    <location>
        <begin position="113"/>
        <end position="133"/>
    </location>
</feature>
<feature type="transmembrane region" description="Helical" evidence="2">
    <location>
        <begin position="178"/>
        <end position="198"/>
    </location>
</feature>
<feature type="transmembrane region" description="Helical" evidence="2">
    <location>
        <begin position="226"/>
        <end position="246"/>
    </location>
</feature>
<feature type="transmembrane region" description="Helical" evidence="2">
    <location>
        <begin position="288"/>
        <end position="308"/>
    </location>
</feature>
<feature type="transmembrane region" description="Helical" evidence="2">
    <location>
        <begin position="320"/>
        <end position="340"/>
    </location>
</feature>
<feature type="transmembrane region" description="Helical" evidence="2">
    <location>
        <begin position="347"/>
        <end position="367"/>
    </location>
</feature>
<feature type="binding site" description="axial binding residue" evidence="2">
    <location>
        <position position="83"/>
    </location>
    <ligand>
        <name>heme b</name>
        <dbReference type="ChEBI" id="CHEBI:60344"/>
        <label>b562</label>
    </ligand>
    <ligandPart>
        <name>Fe</name>
        <dbReference type="ChEBI" id="CHEBI:18248"/>
    </ligandPart>
</feature>
<feature type="binding site" description="axial binding residue" evidence="2">
    <location>
        <position position="97"/>
    </location>
    <ligand>
        <name>heme b</name>
        <dbReference type="ChEBI" id="CHEBI:60344"/>
        <label>b566</label>
    </ligand>
    <ligandPart>
        <name>Fe</name>
        <dbReference type="ChEBI" id="CHEBI:18248"/>
    </ligandPart>
</feature>
<feature type="binding site" description="axial binding residue" evidence="2">
    <location>
        <position position="182"/>
    </location>
    <ligand>
        <name>heme b</name>
        <dbReference type="ChEBI" id="CHEBI:60344"/>
        <label>b562</label>
    </ligand>
    <ligandPart>
        <name>Fe</name>
        <dbReference type="ChEBI" id="CHEBI:18248"/>
    </ligandPart>
</feature>
<feature type="binding site" description="axial binding residue" evidence="2">
    <location>
        <position position="196"/>
    </location>
    <ligand>
        <name>heme b</name>
        <dbReference type="ChEBI" id="CHEBI:60344"/>
        <label>b566</label>
    </ligand>
    <ligandPart>
        <name>Fe</name>
        <dbReference type="ChEBI" id="CHEBI:18248"/>
    </ligandPart>
</feature>
<feature type="binding site" evidence="2">
    <location>
        <position position="201"/>
    </location>
    <ligand>
        <name>a ubiquinone</name>
        <dbReference type="ChEBI" id="CHEBI:16389"/>
    </ligand>
</feature>
<sequence>MTNIRKTHPLMKIVNNAFIDLPAPSNISSWWNFGSLLGVCLILQILTGLFLAMHYTSDTMTAFSSVTHICRDVNYGWIIRYMHANGASMFFICLFMHVGRGLYYGSYTFLETWNIGVILLFTVMATAFVGYVLPWGQMSFWGATVITNLLSAIPYIGTNLVEWIWGGFSVDKATLTRFFAFHFILPFIIAALAMVHLLFLHETGSNNPTGIPSDADKIPFHPYYTIKDILGALLLTLFLMLLVLFSPDLLGDPDNYTPANPLNTPPHIKPEWYFLFAYAILRSIPNKLGGVLALVSSILILILMPLLHTSKQRSMMFRPFSQCLFWILVADLLTLTWIGGQPVEYPFITIGQLASILYFLIILVLMPVTSTIENNLLKW</sequence>
<evidence type="ECO:0000250" key="1"/>
<evidence type="ECO:0000250" key="2">
    <source>
        <dbReference type="UniProtKB" id="P00157"/>
    </source>
</evidence>
<evidence type="ECO:0000255" key="3">
    <source>
        <dbReference type="PROSITE-ProRule" id="PRU00967"/>
    </source>
</evidence>
<evidence type="ECO:0000255" key="4">
    <source>
        <dbReference type="PROSITE-ProRule" id="PRU00968"/>
    </source>
</evidence>
<reference key="1">
    <citation type="submission" date="2001-05" db="EMBL/GenBank/DDBJ databases">
        <title>Phylogeny of Cervidae based on mitochondrial genes.</title>
        <authorList>
            <person name="Ludt C."/>
            <person name="Kuehn R."/>
            <person name="Schroeder W."/>
            <person name="Rottmann O."/>
        </authorList>
    </citation>
    <scope>NUCLEOTIDE SEQUENCE [GENOMIC DNA]</scope>
</reference>
<keyword id="KW-0249">Electron transport</keyword>
<keyword id="KW-0349">Heme</keyword>
<keyword id="KW-0408">Iron</keyword>
<keyword id="KW-0472">Membrane</keyword>
<keyword id="KW-0479">Metal-binding</keyword>
<keyword id="KW-0496">Mitochondrion</keyword>
<keyword id="KW-0999">Mitochondrion inner membrane</keyword>
<keyword id="KW-0679">Respiratory chain</keyword>
<keyword id="KW-0812">Transmembrane</keyword>
<keyword id="KW-1133">Transmembrane helix</keyword>
<keyword id="KW-0813">Transport</keyword>
<keyword id="KW-0830">Ubiquinone</keyword>
<name>CYB_ALCAC</name>
<dbReference type="EMBL" id="AY035872">
    <property type="protein sequence ID" value="AAK62530.1"/>
    <property type="molecule type" value="Genomic_DNA"/>
</dbReference>
<dbReference type="SMR" id="Q7HEI2"/>
<dbReference type="GO" id="GO:0005743">
    <property type="term" value="C:mitochondrial inner membrane"/>
    <property type="evidence" value="ECO:0007669"/>
    <property type="project" value="UniProtKB-SubCell"/>
</dbReference>
<dbReference type="GO" id="GO:0045275">
    <property type="term" value="C:respiratory chain complex III"/>
    <property type="evidence" value="ECO:0007669"/>
    <property type="project" value="InterPro"/>
</dbReference>
<dbReference type="GO" id="GO:0046872">
    <property type="term" value="F:metal ion binding"/>
    <property type="evidence" value="ECO:0007669"/>
    <property type="project" value="UniProtKB-KW"/>
</dbReference>
<dbReference type="GO" id="GO:0008121">
    <property type="term" value="F:ubiquinol-cytochrome-c reductase activity"/>
    <property type="evidence" value="ECO:0007669"/>
    <property type="project" value="InterPro"/>
</dbReference>
<dbReference type="GO" id="GO:0006122">
    <property type="term" value="P:mitochondrial electron transport, ubiquinol to cytochrome c"/>
    <property type="evidence" value="ECO:0007669"/>
    <property type="project" value="TreeGrafter"/>
</dbReference>
<dbReference type="CDD" id="cd00290">
    <property type="entry name" value="cytochrome_b_C"/>
    <property type="match status" value="1"/>
</dbReference>
<dbReference type="CDD" id="cd00284">
    <property type="entry name" value="Cytochrome_b_N"/>
    <property type="match status" value="1"/>
</dbReference>
<dbReference type="FunFam" id="1.20.810.10:FF:000002">
    <property type="entry name" value="Cytochrome b"/>
    <property type="match status" value="1"/>
</dbReference>
<dbReference type="Gene3D" id="1.20.810.10">
    <property type="entry name" value="Cytochrome Bc1 Complex, Chain C"/>
    <property type="match status" value="1"/>
</dbReference>
<dbReference type="InterPro" id="IPR005798">
    <property type="entry name" value="Cyt_b/b6_C"/>
</dbReference>
<dbReference type="InterPro" id="IPR036150">
    <property type="entry name" value="Cyt_b/b6_C_sf"/>
</dbReference>
<dbReference type="InterPro" id="IPR005797">
    <property type="entry name" value="Cyt_b/b6_N"/>
</dbReference>
<dbReference type="InterPro" id="IPR027387">
    <property type="entry name" value="Cytb/b6-like_sf"/>
</dbReference>
<dbReference type="InterPro" id="IPR030689">
    <property type="entry name" value="Cytochrome_b"/>
</dbReference>
<dbReference type="InterPro" id="IPR048260">
    <property type="entry name" value="Cytochrome_b_C_euk/bac"/>
</dbReference>
<dbReference type="InterPro" id="IPR048259">
    <property type="entry name" value="Cytochrome_b_N_euk/bac"/>
</dbReference>
<dbReference type="InterPro" id="IPR016174">
    <property type="entry name" value="Di-haem_cyt_TM"/>
</dbReference>
<dbReference type="PANTHER" id="PTHR19271">
    <property type="entry name" value="CYTOCHROME B"/>
    <property type="match status" value="1"/>
</dbReference>
<dbReference type="PANTHER" id="PTHR19271:SF16">
    <property type="entry name" value="CYTOCHROME B"/>
    <property type="match status" value="1"/>
</dbReference>
<dbReference type="Pfam" id="PF00032">
    <property type="entry name" value="Cytochrom_B_C"/>
    <property type="match status" value="1"/>
</dbReference>
<dbReference type="Pfam" id="PF00033">
    <property type="entry name" value="Cytochrome_B"/>
    <property type="match status" value="1"/>
</dbReference>
<dbReference type="PIRSF" id="PIRSF038885">
    <property type="entry name" value="COB"/>
    <property type="match status" value="1"/>
</dbReference>
<dbReference type="SUPFAM" id="SSF81648">
    <property type="entry name" value="a domain/subunit of cytochrome bc1 complex (Ubiquinol-cytochrome c reductase)"/>
    <property type="match status" value="1"/>
</dbReference>
<dbReference type="SUPFAM" id="SSF81342">
    <property type="entry name" value="Transmembrane di-heme cytochromes"/>
    <property type="match status" value="1"/>
</dbReference>
<dbReference type="PROSITE" id="PS51003">
    <property type="entry name" value="CYTB_CTER"/>
    <property type="match status" value="1"/>
</dbReference>
<dbReference type="PROSITE" id="PS51002">
    <property type="entry name" value="CYTB_NTER"/>
    <property type="match status" value="1"/>
</dbReference>
<gene>
    <name type="primary">MT-CYB</name>
    <name type="synonym">COB</name>
    <name type="synonym">CYTB</name>
    <name type="synonym">MTCYB</name>
</gene>
<organism>
    <name type="scientific">Alces alces cameloides</name>
    <name type="common">Ussuri moose</name>
    <name type="synonym">Siberian moose</name>
    <dbReference type="NCBI Taxonomy" id="162953"/>
    <lineage>
        <taxon>Eukaryota</taxon>
        <taxon>Metazoa</taxon>
        <taxon>Chordata</taxon>
        <taxon>Craniata</taxon>
        <taxon>Vertebrata</taxon>
        <taxon>Euteleostomi</taxon>
        <taxon>Mammalia</taxon>
        <taxon>Eutheria</taxon>
        <taxon>Laurasiatheria</taxon>
        <taxon>Artiodactyla</taxon>
        <taxon>Ruminantia</taxon>
        <taxon>Pecora</taxon>
        <taxon>Cervidae</taxon>
        <taxon>Odocoileinae</taxon>
        <taxon>Alces</taxon>
    </lineage>
</organism>
<accession>Q7HEI2</accession>
<comment type="function">
    <text evidence="2">Component of the ubiquinol-cytochrome c reductase complex (complex III or cytochrome b-c1 complex) that is part of the mitochondrial respiratory chain. The b-c1 complex mediates electron transfer from ubiquinol to cytochrome c. Contributes to the generation of a proton gradient across the mitochondrial membrane that is then used for ATP synthesis.</text>
</comment>
<comment type="cofactor">
    <cofactor evidence="2">
        <name>heme b</name>
        <dbReference type="ChEBI" id="CHEBI:60344"/>
    </cofactor>
    <text evidence="2">Binds 2 heme b groups non-covalently.</text>
</comment>
<comment type="subunit">
    <text evidence="2">The cytochrome bc1 complex contains 11 subunits: 3 respiratory subunits (MT-CYB, CYC1 and UQCRFS1), 2 core proteins (UQCRC1 and UQCRC2) and 6 low-molecular weight proteins (UQCRH/QCR6, UQCRB/QCR7, UQCRQ/QCR8, UQCR10/QCR9, UQCR11/QCR10 and a cleavage product of UQCRFS1). This cytochrome bc1 complex then forms a dimer.</text>
</comment>
<comment type="subcellular location">
    <subcellularLocation>
        <location evidence="2">Mitochondrion inner membrane</location>
        <topology evidence="2">Multi-pass membrane protein</topology>
    </subcellularLocation>
</comment>
<comment type="miscellaneous">
    <text evidence="1">Heme 1 (or BL or b562) is low-potential and absorbs at about 562 nm, and heme 2 (or BH or b566) is high-potential and absorbs at about 566 nm.</text>
</comment>
<comment type="similarity">
    <text evidence="3 4">Belongs to the cytochrome b family.</text>
</comment>
<comment type="caution">
    <text evidence="2">The full-length protein contains only eight transmembrane helices, not nine as predicted by bioinformatics tools.</text>
</comment>
<proteinExistence type="inferred from homology"/>
<geneLocation type="mitochondrion"/>